<organism>
    <name type="scientific">Bacillus cereus (strain ATCC 14579 / DSM 31 / CCUG 7414 / JCM 2152 / NBRC 15305 / NCIMB 9373 / NCTC 2599 / NRRL B-3711)</name>
    <dbReference type="NCBI Taxonomy" id="226900"/>
    <lineage>
        <taxon>Bacteria</taxon>
        <taxon>Bacillati</taxon>
        <taxon>Bacillota</taxon>
        <taxon>Bacilli</taxon>
        <taxon>Bacillales</taxon>
        <taxon>Bacillaceae</taxon>
        <taxon>Bacillus</taxon>
        <taxon>Bacillus cereus group</taxon>
    </lineage>
</organism>
<dbReference type="EC" id="3.5.1.104" evidence="2 4"/>
<dbReference type="EMBL" id="AE016877">
    <property type="protein sequence ID" value="AAP08931.1"/>
    <property type="molecule type" value="Genomic_DNA"/>
</dbReference>
<dbReference type="RefSeq" id="NP_831730.1">
    <property type="nucleotide sequence ID" value="NC_004722.1"/>
</dbReference>
<dbReference type="RefSeq" id="WP_000291199.1">
    <property type="nucleotide sequence ID" value="NZ_CP138336.1"/>
</dbReference>
<dbReference type="PDB" id="4L1G">
    <property type="method" value="X-ray"/>
    <property type="resolution" value="2.34 A"/>
    <property type="chains" value="A/B/C/D=9-275"/>
</dbReference>
<dbReference type="PDB" id="5O6Y">
    <property type="method" value="X-ray"/>
    <property type="resolution" value="2.50 A"/>
    <property type="chains" value="A/B/C/D=61-274"/>
</dbReference>
<dbReference type="PDBsum" id="4L1G"/>
<dbReference type="PDBsum" id="5O6Y"/>
<dbReference type="SMR" id="Q81EK9"/>
<dbReference type="STRING" id="226900.BC_1960"/>
<dbReference type="BindingDB" id="Q81EK9"/>
<dbReference type="ChEMBL" id="CHEMBL4295615"/>
<dbReference type="KEGG" id="bce:BC1960"/>
<dbReference type="PATRIC" id="fig|226900.8.peg.1966"/>
<dbReference type="HOGENOM" id="CLU_021264_0_4_9"/>
<dbReference type="OrthoDB" id="9812065at2"/>
<dbReference type="BioCyc" id="MetaCyc:MONOMER-15494"/>
<dbReference type="BRENDA" id="3.5.1.104">
    <property type="organism ID" value="648"/>
</dbReference>
<dbReference type="SABIO-RK" id="Q81EK9"/>
<dbReference type="EvolutionaryTrace" id="Q81EK9"/>
<dbReference type="Proteomes" id="UP000001417">
    <property type="component" value="Chromosome"/>
</dbReference>
<dbReference type="GO" id="GO:0016810">
    <property type="term" value="F:hydrolase activity, acting on carbon-nitrogen (but not peptide) bonds"/>
    <property type="evidence" value="ECO:0007669"/>
    <property type="project" value="InterPro"/>
</dbReference>
<dbReference type="GO" id="GO:0046872">
    <property type="term" value="F:metal ion binding"/>
    <property type="evidence" value="ECO:0007669"/>
    <property type="project" value="UniProtKB-KW"/>
</dbReference>
<dbReference type="GO" id="GO:0005975">
    <property type="term" value="P:carbohydrate metabolic process"/>
    <property type="evidence" value="ECO:0007669"/>
    <property type="project" value="InterPro"/>
</dbReference>
<dbReference type="CDD" id="cd10917">
    <property type="entry name" value="CE4_NodB_like_6s_7s"/>
    <property type="match status" value="1"/>
</dbReference>
<dbReference type="Gene3D" id="3.20.20.370">
    <property type="entry name" value="Glycoside hydrolase/deacetylase"/>
    <property type="match status" value="1"/>
</dbReference>
<dbReference type="InterPro" id="IPR011330">
    <property type="entry name" value="Glyco_hydro/deAcase_b/a-brl"/>
</dbReference>
<dbReference type="InterPro" id="IPR002509">
    <property type="entry name" value="NODB_dom"/>
</dbReference>
<dbReference type="InterPro" id="IPR054895">
    <property type="entry name" value="PGN_GlcNAc_Dac"/>
</dbReference>
<dbReference type="InterPro" id="IPR050248">
    <property type="entry name" value="Polysacc_deacetylase_ArnD"/>
</dbReference>
<dbReference type="NCBIfam" id="NF045821">
    <property type="entry name" value="PgAcgDacpgdA1_Bac"/>
    <property type="match status" value="1"/>
</dbReference>
<dbReference type="PANTHER" id="PTHR10587:SF133">
    <property type="entry name" value="CHITIN DEACETYLASE 1-RELATED"/>
    <property type="match status" value="1"/>
</dbReference>
<dbReference type="PANTHER" id="PTHR10587">
    <property type="entry name" value="GLYCOSYL TRANSFERASE-RELATED"/>
    <property type="match status" value="1"/>
</dbReference>
<dbReference type="Pfam" id="PF01522">
    <property type="entry name" value="Polysacc_deac_1"/>
    <property type="match status" value="1"/>
</dbReference>
<dbReference type="SUPFAM" id="SSF88713">
    <property type="entry name" value="Glycoside hydrolase/deacetylase"/>
    <property type="match status" value="1"/>
</dbReference>
<dbReference type="PROSITE" id="PS51677">
    <property type="entry name" value="NODB"/>
    <property type="match status" value="1"/>
</dbReference>
<feature type="chain" id="PRO_0000447692" description="Peptidoglycan-N-acetylglucosamine deacetylase BC_1960">
    <location>
        <begin position="1"/>
        <end position="275"/>
    </location>
</feature>
<feature type="domain" description="NodB homology" evidence="1">
    <location>
        <begin position="81"/>
        <end position="262"/>
    </location>
</feature>
<feature type="active site" description="Proton acceptor" evidence="1">
    <location>
        <position position="88"/>
    </location>
</feature>
<feature type="active site" description="Proton donor" evidence="1">
    <location>
        <position position="233"/>
    </location>
</feature>
<feature type="binding site" evidence="5">
    <location>
        <position position="89"/>
    </location>
    <ligand>
        <name>Zn(2+)</name>
        <dbReference type="ChEBI" id="CHEBI:29105"/>
    </ligand>
</feature>
<feature type="binding site" evidence="5">
    <location>
        <position position="139"/>
    </location>
    <ligand>
        <name>Zn(2+)</name>
        <dbReference type="ChEBI" id="CHEBI:29105"/>
    </ligand>
</feature>
<feature type="binding site" evidence="5">
    <location>
        <position position="143"/>
    </location>
    <ligand>
        <name>Zn(2+)</name>
        <dbReference type="ChEBI" id="CHEBI:29105"/>
    </ligand>
</feature>
<feature type="modified residue" description="2-hydroxyproline; partial" evidence="3">
    <location>
        <position position="179"/>
    </location>
</feature>
<feature type="helix" evidence="11">
    <location>
        <begin position="63"/>
        <end position="69"/>
    </location>
</feature>
<feature type="strand" evidence="11">
    <location>
        <begin position="70"/>
        <end position="75"/>
    </location>
</feature>
<feature type="strand" evidence="11">
    <location>
        <begin position="80"/>
        <end position="90"/>
    </location>
</feature>
<feature type="strand" evidence="11">
    <location>
        <begin position="93"/>
        <end position="95"/>
    </location>
</feature>
<feature type="helix" evidence="11">
    <location>
        <begin position="100"/>
        <end position="105"/>
    </location>
</feature>
<feature type="strand" evidence="11">
    <location>
        <begin position="111"/>
        <end position="114"/>
    </location>
</feature>
<feature type="helix" evidence="11">
    <location>
        <begin position="116"/>
        <end position="121"/>
    </location>
</feature>
<feature type="helix" evidence="11">
    <location>
        <begin position="123"/>
        <end position="131"/>
    </location>
</feature>
<feature type="strand" evidence="11">
    <location>
        <begin position="135"/>
        <end position="138"/>
    </location>
</feature>
<feature type="helix" evidence="11">
    <location>
        <begin position="146"/>
        <end position="148"/>
    </location>
</feature>
<feature type="helix" evidence="11">
    <location>
        <begin position="151"/>
        <end position="169"/>
    </location>
</feature>
<feature type="helix" evidence="12">
    <location>
        <begin position="179"/>
        <end position="181"/>
    </location>
</feature>
<feature type="helix" evidence="11">
    <location>
        <begin position="185"/>
        <end position="193"/>
    </location>
</feature>
<feature type="strand" evidence="11">
    <location>
        <begin position="197"/>
        <end position="199"/>
    </location>
</feature>
<feature type="strand" evidence="11">
    <location>
        <begin position="202"/>
        <end position="204"/>
    </location>
</feature>
<feature type="helix" evidence="11">
    <location>
        <begin position="207"/>
        <end position="209"/>
    </location>
</feature>
<feature type="helix" evidence="11">
    <location>
        <begin position="213"/>
        <end position="223"/>
    </location>
</feature>
<feature type="strand" evidence="11">
    <location>
        <begin position="229"/>
        <end position="233"/>
    </location>
</feature>
<feature type="helix" evidence="11">
    <location>
        <begin position="241"/>
        <end position="256"/>
    </location>
</feature>
<feature type="helix" evidence="11">
    <location>
        <begin position="264"/>
        <end position="267"/>
    </location>
</feature>
<reference key="1">
    <citation type="journal article" date="2003" name="Nature">
        <title>Genome sequence of Bacillus cereus and comparative analysis with Bacillus anthracis.</title>
        <authorList>
            <person name="Ivanova N."/>
            <person name="Sorokin A."/>
            <person name="Anderson I."/>
            <person name="Galleron N."/>
            <person name="Candelon B."/>
            <person name="Kapatral V."/>
            <person name="Bhattacharyya A."/>
            <person name="Reznik G."/>
            <person name="Mikhailova N."/>
            <person name="Lapidus A."/>
            <person name="Chu L."/>
            <person name="Mazur M."/>
            <person name="Goltsman E."/>
            <person name="Larsen N."/>
            <person name="D'Souza M."/>
            <person name="Walunas T."/>
            <person name="Grechkin Y."/>
            <person name="Pusch G."/>
            <person name="Haselkorn R."/>
            <person name="Fonstein M."/>
            <person name="Ehrlich S.D."/>
            <person name="Overbeek R."/>
            <person name="Kyrpides N.C."/>
        </authorList>
    </citation>
    <scope>NUCLEOTIDE SEQUENCE [LARGE SCALE GENOMIC DNA]</scope>
    <source>
        <strain>ATCC 14579 / DSM 31 / CCUG 7414 / JCM 2152 / NBRC 15305 / NCIMB 9373 / NCTC 2599 / NRRL B-3711</strain>
    </source>
</reference>
<reference key="2">
    <citation type="journal article" date="2005" name="J. Biol. Chem.">
        <title>Peptidoglycan N-acetylglucosamine deacetylases from Bacillus cereus, highly conserved proteins in Bacillus anthracis.</title>
        <authorList>
            <person name="Psylinakis E."/>
            <person name="Boneca I.G."/>
            <person name="Mavromatis K."/>
            <person name="Deli A."/>
            <person name="Hayhurst E."/>
            <person name="Foster S.J."/>
            <person name="Vaarum K.M."/>
            <person name="Bouriotis V."/>
        </authorList>
    </citation>
    <scope>FUNCTION</scope>
    <scope>CATALYTIC ACTIVITY</scope>
    <scope>ACTIVITY REGULATION</scope>
    <scope>BIOPHYSICOCHEMICAL PROPERTIES</scope>
    <source>
        <strain>ATCC 14579 / DSM 31 / CCUG 7414 / JCM 2152 / NBRC 15305 / NCIMB 9373 / NCTC 2599 / NRRL B-3711</strain>
    </source>
</reference>
<reference key="3">
    <citation type="journal article" date="2008" name="Acta Crystallogr. F">
        <title>Purification, crystallization and preliminary X-ray analysis of the peptidoglycan N-acetylglucosamine deacetylase BC1960 from Bacillus cereus in the presence of its substrate (GlcNAc)6.</title>
        <authorList>
            <person name="Tsalafouta A."/>
            <person name="Psylinakis E."/>
            <person name="Kapetaniou E.G."/>
            <person name="Kotsifaki D."/>
            <person name="Deli A."/>
            <person name="Roidis A."/>
            <person name="Bouriotis V."/>
            <person name="Kokkinidis M."/>
        </authorList>
    </citation>
    <scope>CRYSTALLIZATION</scope>
</reference>
<reference key="4">
    <citation type="journal article" date="2018" name="Bioorg. Med. Chem.">
        <title>Polysaccharide deacetylases serve as new targets for the design of inhibitors against Bacillus anthracis and Bacillus cereus.</title>
        <authorList>
            <person name="Balomenou S."/>
            <person name="Koutsioulis D."/>
            <person name="Tomatsidou A."/>
            <person name="Tzanodaskalaki M."/>
            <person name="Petratos K."/>
            <person name="Bouriotis V."/>
        </authorList>
    </citation>
    <scope>FUNCTION</scope>
    <scope>CATALYTIC ACTIVITY</scope>
    <scope>ACTIVITY REGULATION</scope>
</reference>
<reference evidence="9" key="5">
    <citation type="journal article" date="2017" name="J. Am. Chem. Soc.">
        <title>Unusual alpha-carbon hydroxylation of proline promotes active-site maturation.</title>
        <authorList>
            <person name="Fadouloglou V.E."/>
            <person name="Balomenou S."/>
            <person name="Aivaliotis M."/>
            <person name="Kotsifaki D."/>
            <person name="Arnaouteli S."/>
            <person name="Tomatsidou A."/>
            <person name="Efstathiou G."/>
            <person name="Kountourakis N."/>
            <person name="Miliara S."/>
            <person name="Griniezaki M."/>
            <person name="Tsalafouta A."/>
            <person name="Pergantis S.A."/>
            <person name="Boneca I.G."/>
            <person name="Glykos N.M."/>
            <person name="Bouriotis V."/>
            <person name="Kokkinidis M."/>
        </authorList>
    </citation>
    <scope>X-RAY CRYSTALLOGRAPHY (2.34 ANGSTROMS) OF 9-275</scope>
    <scope>HYDROXYLATION AT PRO-179</scope>
    <scope>ACTIVITY REGULATION</scope>
</reference>
<reference evidence="10" key="6">
    <citation type="submission" date="2017-06" db="PDB data bank">
        <title>Crystal structure of the Bc1960 peptidoglycan N-acetylglucosamine deacetylase in complex with 4-naphthalen-1-yl-~{N}-oxidanyl-benzamide.</title>
        <authorList>
            <person name="Fadouloglou V.E."/>
            <person name="Kotsifaki D."/>
            <person name="Kokkinidis M."/>
        </authorList>
    </citation>
    <scope>X-RAY CRYSTALLOGRAPHY (2.50 ANGSTROMS) OF 61-274 IN COMPLEX WITH ZINC</scope>
    <scope>COFACTOR</scope>
</reference>
<protein>
    <recommendedName>
        <fullName evidence="6">Peptidoglycan-N-acetylglucosamine deacetylase BC_1960</fullName>
        <shortName evidence="6">Peptidoglycan GlcNAc deacetylase</shortName>
        <ecNumber evidence="2 4">3.5.1.104</ecNumber>
    </recommendedName>
</protein>
<evidence type="ECO:0000255" key="1">
    <source>
        <dbReference type="PROSITE-ProRule" id="PRU01014"/>
    </source>
</evidence>
<evidence type="ECO:0000269" key="2">
    <source>
    </source>
</evidence>
<evidence type="ECO:0000269" key="3">
    <source>
    </source>
</evidence>
<evidence type="ECO:0000269" key="4">
    <source>
    </source>
</evidence>
<evidence type="ECO:0000269" key="5">
    <source ref="6"/>
</evidence>
<evidence type="ECO:0000303" key="6">
    <source>
    </source>
</evidence>
<evidence type="ECO:0000305" key="7"/>
<evidence type="ECO:0000312" key="8">
    <source>
        <dbReference type="EMBL" id="AAP08931.1"/>
    </source>
</evidence>
<evidence type="ECO:0007744" key="9">
    <source>
        <dbReference type="PDB" id="4L1G"/>
    </source>
</evidence>
<evidence type="ECO:0007744" key="10">
    <source>
        <dbReference type="PDB" id="5O6Y"/>
    </source>
</evidence>
<evidence type="ECO:0007829" key="11">
    <source>
        <dbReference type="PDB" id="4L1G"/>
    </source>
</evidence>
<evidence type="ECO:0007829" key="12">
    <source>
        <dbReference type="PDB" id="5O6Y"/>
    </source>
</evidence>
<comment type="function">
    <text evidence="2 4">Catalyzes the deacetylation of N-acetylglucosamine (GlcNAc) residues in peptidoglycan (PubMed:15961396, PubMed:29983281). Also acts on soluble chitin substrates and N-acetylchitooligomers. Acts on cell wall peptidoglycan from the Gram-positive bacteria B.cereus and B.subtilis and the Gram-negative bacterium H.pylori. Not active on acetylated xylan (PubMed:15961396).</text>
</comment>
<comment type="catalytic activity">
    <reaction evidence="2 4">
        <text>peptidoglycan-N-acetyl-D-glucosamine + H2O = peptidoglycan-D-glucosamine + acetate.</text>
        <dbReference type="EC" id="3.5.1.104"/>
    </reaction>
</comment>
<comment type="cofactor">
    <cofactor evidence="5">
        <name>Zn(2+)</name>
        <dbReference type="ChEBI" id="CHEBI:29105"/>
    </cofactor>
</comment>
<comment type="activity regulation">
    <text evidence="2 3 4">Deacetylase activity is stimulated by hydroxylation on Pro-179 (PubMed:28333455). Inhibited by CuCl(2) and ZnCl(2) (PubMed:15961396). Inhibited by the hydroxamate N-hydroxy-4-(naphthalene-1-yl)benzamide (NHNB) (PubMed:29983281).</text>
</comment>
<comment type="biophysicochemical properties">
    <kinetics>
        <KM evidence="2">4.1 mM for GlcNAc(2)</KM>
        <KM evidence="2">2.46 mM for GlcNAc(3)</KM>
        <KM evidence="2">1.18 mM for GlcNAc(4)</KM>
        <KM evidence="2">0.37 mM for GlcNAc(5)</KM>
        <KM evidence="2">0.3 mM for GlcNAc(6)</KM>
        <Vmax evidence="2">24.3 umol/min/mg enzyme with GlcNAc(2) as substrate</Vmax>
        <Vmax evidence="2">30.6 umol/min/mg enzyme with GlcNAc(3) as substrate</Vmax>
        <Vmax evidence="2">47.3 umol/min/mg enzyme with GlcNAc(4) as substrate</Vmax>
        <Vmax evidence="2">15.5 umol/min/mg enzyme with GlcNAc(5) as substrate</Vmax>
        <Vmax evidence="2">13.4 umol/min/mg enzyme with GlcNAc(6) as substrate</Vmax>
    </kinetics>
    <phDependence>
        <text evidence="2">Optimum pH is 6.0.</text>
    </phDependence>
    <temperatureDependence>
        <text evidence="2">Optimum temperature is 50 degrees Celsius.</text>
    </temperatureDependence>
</comment>
<comment type="PTM">
    <text evidence="3">Hydroxylated on Pro-179. Hydroxylation alters the active site and enhances significantly deacetylase activity, probably by creating a more favorable environment for transition-state stabilization. It might be autocatalytic.</text>
</comment>
<comment type="similarity">
    <text evidence="7">Belongs to the polysaccharide deacetylase family.</text>
</comment>
<sequence>MYYFYSPEMFAPYQWGLERDVSYAYMPYNSFYYGDYINSLPYAYIPQNYEVQMKADDRGSWTPFSWVEKYAYAFSGPYNKAEVALTFDDGPDLEFTPKILDKLKQHNVKATFFLLGENAEKFPNIVKRIANEGHVIGNHTYSHPNLAKVNEDEYRNQIIKTEEILNRLAGYAPKFIRPPYGEILENQLKWATEQNFMIVQWSVDTVDWKGVSADTITNNVLGNSFPGSVILQHSTPGGHLQGSVDALDKIIPQLKTKGARFVTLPSMFQTSKERK</sequence>
<gene>
    <name evidence="8" type="ordered locus">BC_1960</name>
</gene>
<proteinExistence type="evidence at protein level"/>
<keyword id="KW-0002">3D-structure</keyword>
<keyword id="KW-0378">Hydrolase</keyword>
<keyword id="KW-0379">Hydroxylation</keyword>
<keyword id="KW-0479">Metal-binding</keyword>
<keyword id="KW-1185">Reference proteome</keyword>
<keyword id="KW-0862">Zinc</keyword>
<accession>Q81EK9</accession>
<name>PGDA1_BACCR</name>